<evidence type="ECO:0000255" key="1">
    <source>
        <dbReference type="HAMAP-Rule" id="MF_03008"/>
    </source>
</evidence>
<accession>Q7ZV55</accession>
<proteinExistence type="evidence at transcript level"/>
<name>EIF3I_DANRE</name>
<gene>
    <name type="primary">eif3i</name>
    <name type="synonym">eif3s2</name>
</gene>
<keyword id="KW-0963">Cytoplasm</keyword>
<keyword id="KW-0396">Initiation factor</keyword>
<keyword id="KW-0648">Protein biosynthesis</keyword>
<keyword id="KW-1185">Reference proteome</keyword>
<keyword id="KW-0677">Repeat</keyword>
<keyword id="KW-0853">WD repeat</keyword>
<organism>
    <name type="scientific">Danio rerio</name>
    <name type="common">Zebrafish</name>
    <name type="synonym">Brachydanio rerio</name>
    <dbReference type="NCBI Taxonomy" id="7955"/>
    <lineage>
        <taxon>Eukaryota</taxon>
        <taxon>Metazoa</taxon>
        <taxon>Chordata</taxon>
        <taxon>Craniata</taxon>
        <taxon>Vertebrata</taxon>
        <taxon>Euteleostomi</taxon>
        <taxon>Actinopterygii</taxon>
        <taxon>Neopterygii</taxon>
        <taxon>Teleostei</taxon>
        <taxon>Ostariophysi</taxon>
        <taxon>Cypriniformes</taxon>
        <taxon>Danionidae</taxon>
        <taxon>Danioninae</taxon>
        <taxon>Danio</taxon>
    </lineage>
</organism>
<protein>
    <recommendedName>
        <fullName evidence="1">Eukaryotic translation initiation factor 3 subunit I</fullName>
        <shortName evidence="1">eIF3i</shortName>
    </recommendedName>
    <alternativeName>
        <fullName evidence="1">Eukaryotic translation initiation factor 3 subunit 2</fullName>
    </alternativeName>
    <alternativeName>
        <fullName evidence="1">eIF-3-beta</fullName>
    </alternativeName>
    <alternativeName>
        <fullName evidence="1">eIF3 p36</fullName>
    </alternativeName>
</protein>
<reference key="1">
    <citation type="submission" date="2004-01" db="EMBL/GenBank/DDBJ databases">
        <authorList>
            <consortium name="NIH - Zebrafish Gene Collection (ZGC) project"/>
        </authorList>
    </citation>
    <scope>NUCLEOTIDE SEQUENCE [LARGE SCALE MRNA]</scope>
</reference>
<feature type="chain" id="PRO_0000365332" description="Eukaryotic translation initiation factor 3 subunit I">
    <location>
        <begin position="1"/>
        <end position="325"/>
    </location>
</feature>
<feature type="repeat" description="WD 1">
    <location>
        <begin position="8"/>
        <end position="47"/>
    </location>
</feature>
<feature type="repeat" description="WD 2">
    <location>
        <begin position="50"/>
        <end position="89"/>
    </location>
</feature>
<feature type="repeat" description="WD 3">
    <location>
        <begin position="144"/>
        <end position="183"/>
    </location>
</feature>
<feature type="repeat" description="WD 4">
    <location>
        <begin position="186"/>
        <end position="225"/>
    </location>
</feature>
<feature type="repeat" description="WD 5">
    <location>
        <begin position="283"/>
        <end position="324"/>
    </location>
</feature>
<sequence length="325" mass="36287">MKPILLQGHERSITQIKYNREGDLLFSVAKDPIANVWYSVNGERLGTYNGHTGAVWCVDVDWDTKNVLTGSADNSCRLWDCETGKQLALLETSSAVRTCGFDFSGNIIMFSTDKQMGYQCFLNYYDLRDPQQIEDNQPYISVPCSESKITSAVWGPLGEFVIAGHENGEINQFSAKSGEVLKKAKEHTKQINDIQSSVDLTMIISASKDCTAKMFDSSTLEHVKTFKTERPVNSAAISPIMDHVVMGGGQEAMEVTTTSTRIGKFEARFFHAAYEEEFGRVKGHFGPINCVAFHPDGKSYSSGGEDGYVRIHYFDPHYFDFELEA</sequence>
<comment type="function">
    <text evidence="1">Component of the eukaryotic translation initiation factor 3 (eIF-3) complex, which is involved in protein synthesis of a specialized repertoire of mRNAs and, together with other initiation factors, stimulates binding of mRNA and methionyl-tRNAi to the 40S ribosome. The eIF-3 complex specifically targets and initiates translation of a subset of mRNAs involved in cell proliferation.</text>
</comment>
<comment type="subunit">
    <text evidence="1">Component of the eukaryotic translation initiation factor 3 (eIF-3) complex, which is composed of 13 subunits: eif3a, eif3b, eif3c, eif3d, eif3e, eif3f, eif3g, eif3h, eif3i, eif3j, eif3k, eif3l and eif3m.</text>
</comment>
<comment type="subcellular location">
    <subcellularLocation>
        <location evidence="1">Cytoplasm</location>
    </subcellularLocation>
</comment>
<comment type="similarity">
    <text evidence="1">Belongs to the eIF-3 subunit I family.</text>
</comment>
<dbReference type="EMBL" id="BC045995">
    <property type="protein sequence ID" value="AAH45995.1"/>
    <property type="molecule type" value="mRNA"/>
</dbReference>
<dbReference type="EMBL" id="BC065874">
    <property type="protein sequence ID" value="AAH65874.1"/>
    <property type="molecule type" value="mRNA"/>
</dbReference>
<dbReference type="RefSeq" id="NP_998155.1">
    <property type="nucleotide sequence ID" value="NM_212990.1"/>
</dbReference>
<dbReference type="SMR" id="Q7ZV55"/>
<dbReference type="FunCoup" id="Q7ZV55">
    <property type="interactions" value="2603"/>
</dbReference>
<dbReference type="STRING" id="7955.ENSDARP00000017792"/>
<dbReference type="PaxDb" id="7955-ENSDARP00000017792"/>
<dbReference type="Ensembl" id="ENSDART00000005119">
    <property type="protein sequence ID" value="ENSDARP00000017792"/>
    <property type="gene ID" value="ENSDARG00000017445"/>
</dbReference>
<dbReference type="GeneID" id="406263"/>
<dbReference type="KEGG" id="dre:406263"/>
<dbReference type="AGR" id="ZFIN:ZDB-GENE-040426-1922"/>
<dbReference type="CTD" id="8668"/>
<dbReference type="ZFIN" id="ZDB-GENE-040426-1922">
    <property type="gene designation" value="eif3i"/>
</dbReference>
<dbReference type="eggNOG" id="KOG0643">
    <property type="taxonomic scope" value="Eukaryota"/>
</dbReference>
<dbReference type="HOGENOM" id="CLU_043845_0_1_1"/>
<dbReference type="InParanoid" id="Q7ZV55"/>
<dbReference type="OMA" id="VWFSHNG"/>
<dbReference type="OrthoDB" id="24966at2759"/>
<dbReference type="PhylomeDB" id="Q7ZV55"/>
<dbReference type="TreeFam" id="TF101515"/>
<dbReference type="Reactome" id="R-DRE-156827">
    <property type="pathway name" value="L13a-mediated translational silencing of Ceruloplasmin expression"/>
</dbReference>
<dbReference type="Reactome" id="R-DRE-72689">
    <property type="pathway name" value="Formation of a pool of free 40S subunits"/>
</dbReference>
<dbReference type="Reactome" id="R-DRE-72695">
    <property type="pathway name" value="Formation of the ternary complex, and subsequently, the 43S complex"/>
</dbReference>
<dbReference type="Reactome" id="R-DRE-72702">
    <property type="pathway name" value="Ribosomal scanning and start codon recognition"/>
</dbReference>
<dbReference type="PRO" id="PR:Q7ZV55"/>
<dbReference type="Proteomes" id="UP000000437">
    <property type="component" value="Chromosome 19"/>
</dbReference>
<dbReference type="Bgee" id="ENSDARG00000017445">
    <property type="expression patterns" value="Expressed in pharyngeal gill and 39 other cell types or tissues"/>
</dbReference>
<dbReference type="GO" id="GO:0016282">
    <property type="term" value="C:eukaryotic 43S preinitiation complex"/>
    <property type="evidence" value="ECO:0007669"/>
    <property type="project" value="UniProtKB-UniRule"/>
</dbReference>
<dbReference type="GO" id="GO:0033290">
    <property type="term" value="C:eukaryotic 48S preinitiation complex"/>
    <property type="evidence" value="ECO:0007669"/>
    <property type="project" value="UniProtKB-UniRule"/>
</dbReference>
<dbReference type="GO" id="GO:0005852">
    <property type="term" value="C:eukaryotic translation initiation factor 3 complex"/>
    <property type="evidence" value="ECO:0000250"/>
    <property type="project" value="UniProtKB"/>
</dbReference>
<dbReference type="GO" id="GO:0071541">
    <property type="term" value="C:eukaryotic translation initiation factor 3 complex, eIF3m"/>
    <property type="evidence" value="ECO:0000318"/>
    <property type="project" value="GO_Central"/>
</dbReference>
<dbReference type="GO" id="GO:0003723">
    <property type="term" value="F:RNA binding"/>
    <property type="evidence" value="ECO:0000318"/>
    <property type="project" value="GO_Central"/>
</dbReference>
<dbReference type="GO" id="GO:0003743">
    <property type="term" value="F:translation initiation factor activity"/>
    <property type="evidence" value="ECO:0000250"/>
    <property type="project" value="UniProtKB"/>
</dbReference>
<dbReference type="GO" id="GO:0002183">
    <property type="term" value="P:cytoplasmic translational initiation"/>
    <property type="evidence" value="ECO:0000318"/>
    <property type="project" value="GO_Central"/>
</dbReference>
<dbReference type="GO" id="GO:0001732">
    <property type="term" value="P:formation of cytoplasmic translation initiation complex"/>
    <property type="evidence" value="ECO:0007669"/>
    <property type="project" value="UniProtKB-UniRule"/>
</dbReference>
<dbReference type="GO" id="GO:0001889">
    <property type="term" value="P:liver development"/>
    <property type="evidence" value="ECO:0000315"/>
    <property type="project" value="ZFIN"/>
</dbReference>
<dbReference type="GO" id="GO:0002040">
    <property type="term" value="P:sprouting angiogenesis"/>
    <property type="evidence" value="ECO:0000315"/>
    <property type="project" value="ZFIN"/>
</dbReference>
<dbReference type="GO" id="GO:0006413">
    <property type="term" value="P:translational initiation"/>
    <property type="evidence" value="ECO:0000250"/>
    <property type="project" value="UniProtKB"/>
</dbReference>
<dbReference type="FunFam" id="2.130.10.10:FF:000127">
    <property type="entry name" value="Eukaryotic translation initiation factor 3 subunit I"/>
    <property type="match status" value="1"/>
</dbReference>
<dbReference type="Gene3D" id="2.130.10.10">
    <property type="entry name" value="YVTN repeat-like/Quinoprotein amine dehydrogenase"/>
    <property type="match status" value="1"/>
</dbReference>
<dbReference type="HAMAP" id="MF_03008">
    <property type="entry name" value="eIF3i"/>
    <property type="match status" value="1"/>
</dbReference>
<dbReference type="InterPro" id="IPR027525">
    <property type="entry name" value="eIF3i"/>
</dbReference>
<dbReference type="InterPro" id="IPR015943">
    <property type="entry name" value="WD40/YVTN_repeat-like_dom_sf"/>
</dbReference>
<dbReference type="InterPro" id="IPR019775">
    <property type="entry name" value="WD40_repeat_CS"/>
</dbReference>
<dbReference type="InterPro" id="IPR036322">
    <property type="entry name" value="WD40_repeat_dom_sf"/>
</dbReference>
<dbReference type="InterPro" id="IPR001680">
    <property type="entry name" value="WD40_rpt"/>
</dbReference>
<dbReference type="PANTHER" id="PTHR19877">
    <property type="entry name" value="EUKARYOTIC TRANSLATION INITIATION FACTOR 3 SUBUNIT I"/>
    <property type="match status" value="1"/>
</dbReference>
<dbReference type="PANTHER" id="PTHR19877:SF1">
    <property type="entry name" value="EUKARYOTIC TRANSLATION INITIATION FACTOR 3 SUBUNIT I"/>
    <property type="match status" value="1"/>
</dbReference>
<dbReference type="Pfam" id="PF24805">
    <property type="entry name" value="EIF3I"/>
    <property type="match status" value="1"/>
</dbReference>
<dbReference type="SMART" id="SM00320">
    <property type="entry name" value="WD40"/>
    <property type="match status" value="6"/>
</dbReference>
<dbReference type="SUPFAM" id="SSF50978">
    <property type="entry name" value="WD40 repeat-like"/>
    <property type="match status" value="1"/>
</dbReference>
<dbReference type="PROSITE" id="PS00678">
    <property type="entry name" value="WD_REPEATS_1"/>
    <property type="match status" value="1"/>
</dbReference>
<dbReference type="PROSITE" id="PS50082">
    <property type="entry name" value="WD_REPEATS_2"/>
    <property type="match status" value="3"/>
</dbReference>
<dbReference type="PROSITE" id="PS50294">
    <property type="entry name" value="WD_REPEATS_REGION"/>
    <property type="match status" value="2"/>
</dbReference>